<gene>
    <name evidence="1" type="primary">truA</name>
    <name type="ordered locus">XfasM23_0642</name>
</gene>
<protein>
    <recommendedName>
        <fullName evidence="1">tRNA pseudouridine synthase A</fullName>
        <ecNumber evidence="1">5.4.99.12</ecNumber>
    </recommendedName>
    <alternativeName>
        <fullName evidence="1">tRNA pseudouridine(38-40) synthase</fullName>
    </alternativeName>
    <alternativeName>
        <fullName evidence="1">tRNA pseudouridylate synthase I</fullName>
    </alternativeName>
    <alternativeName>
        <fullName evidence="1">tRNA-uridine isomerase I</fullName>
    </alternativeName>
</protein>
<dbReference type="EC" id="5.4.99.12" evidence="1"/>
<dbReference type="EMBL" id="CP001011">
    <property type="protein sequence ID" value="ACB92084.1"/>
    <property type="molecule type" value="Genomic_DNA"/>
</dbReference>
<dbReference type="SMR" id="B2I9J0"/>
<dbReference type="KEGG" id="xfn:XfasM23_0642"/>
<dbReference type="HOGENOM" id="CLU_014673_0_2_6"/>
<dbReference type="Proteomes" id="UP000001698">
    <property type="component" value="Chromosome"/>
</dbReference>
<dbReference type="GO" id="GO:0003723">
    <property type="term" value="F:RNA binding"/>
    <property type="evidence" value="ECO:0007669"/>
    <property type="project" value="InterPro"/>
</dbReference>
<dbReference type="GO" id="GO:0160147">
    <property type="term" value="F:tRNA pseudouridine(38-40) synthase activity"/>
    <property type="evidence" value="ECO:0007669"/>
    <property type="project" value="UniProtKB-EC"/>
</dbReference>
<dbReference type="GO" id="GO:0031119">
    <property type="term" value="P:tRNA pseudouridine synthesis"/>
    <property type="evidence" value="ECO:0007669"/>
    <property type="project" value="UniProtKB-UniRule"/>
</dbReference>
<dbReference type="CDD" id="cd02570">
    <property type="entry name" value="PseudoU_synth_EcTruA"/>
    <property type="match status" value="1"/>
</dbReference>
<dbReference type="FunFam" id="3.30.70.580:FF:000001">
    <property type="entry name" value="tRNA pseudouridine synthase A"/>
    <property type="match status" value="1"/>
</dbReference>
<dbReference type="Gene3D" id="3.30.70.660">
    <property type="entry name" value="Pseudouridine synthase I, catalytic domain, C-terminal subdomain"/>
    <property type="match status" value="1"/>
</dbReference>
<dbReference type="Gene3D" id="3.30.70.580">
    <property type="entry name" value="Pseudouridine synthase I, catalytic domain, N-terminal subdomain"/>
    <property type="match status" value="1"/>
</dbReference>
<dbReference type="HAMAP" id="MF_00171">
    <property type="entry name" value="TruA"/>
    <property type="match status" value="1"/>
</dbReference>
<dbReference type="InterPro" id="IPR020103">
    <property type="entry name" value="PsdUridine_synth_cat_dom_sf"/>
</dbReference>
<dbReference type="InterPro" id="IPR001406">
    <property type="entry name" value="PsdUridine_synth_TruA"/>
</dbReference>
<dbReference type="InterPro" id="IPR020097">
    <property type="entry name" value="PsdUridine_synth_TruA_a/b_dom"/>
</dbReference>
<dbReference type="InterPro" id="IPR020095">
    <property type="entry name" value="PsdUridine_synth_TruA_C"/>
</dbReference>
<dbReference type="InterPro" id="IPR020094">
    <property type="entry name" value="TruA/RsuA/RluB/E/F_N"/>
</dbReference>
<dbReference type="NCBIfam" id="TIGR00071">
    <property type="entry name" value="hisT_truA"/>
    <property type="match status" value="1"/>
</dbReference>
<dbReference type="PANTHER" id="PTHR11142">
    <property type="entry name" value="PSEUDOURIDYLATE SYNTHASE"/>
    <property type="match status" value="1"/>
</dbReference>
<dbReference type="PANTHER" id="PTHR11142:SF0">
    <property type="entry name" value="TRNA PSEUDOURIDINE SYNTHASE-LIKE 1"/>
    <property type="match status" value="1"/>
</dbReference>
<dbReference type="Pfam" id="PF01416">
    <property type="entry name" value="PseudoU_synth_1"/>
    <property type="match status" value="2"/>
</dbReference>
<dbReference type="PIRSF" id="PIRSF001430">
    <property type="entry name" value="tRNA_psdUrid_synth"/>
    <property type="match status" value="1"/>
</dbReference>
<dbReference type="SUPFAM" id="SSF55120">
    <property type="entry name" value="Pseudouridine synthase"/>
    <property type="match status" value="1"/>
</dbReference>
<sequence>MMRYALGVEYDGSEFLGWQQLGEMGPSVQATLQQALASVADSSVRVVCAGRTDAGVHGQCQVVHFDSAVTRPPRAWILGTTTRLPSSVAVRWCVPTSEDFHARFSACARRYRYRLLNRQVRPALQHQFLSWERHPLDAQAMHVAAQMLLGENDFSAFRSAQCQALHARRELQAISVRRDAEVIEICVQANAFLHHMVRNIVGSLLMVGTGERPMEWIAELLAGRDRTMAGPTASARGLVFVGPLYPEKWHLPMEVSV</sequence>
<evidence type="ECO:0000255" key="1">
    <source>
        <dbReference type="HAMAP-Rule" id="MF_00171"/>
    </source>
</evidence>
<proteinExistence type="inferred from homology"/>
<keyword id="KW-0413">Isomerase</keyword>
<keyword id="KW-0819">tRNA processing</keyword>
<accession>B2I9J0</accession>
<comment type="function">
    <text evidence="1">Formation of pseudouridine at positions 38, 39 and 40 in the anticodon stem and loop of transfer RNAs.</text>
</comment>
<comment type="catalytic activity">
    <reaction evidence="1">
        <text>uridine(38/39/40) in tRNA = pseudouridine(38/39/40) in tRNA</text>
        <dbReference type="Rhea" id="RHEA:22376"/>
        <dbReference type="Rhea" id="RHEA-COMP:10085"/>
        <dbReference type="Rhea" id="RHEA-COMP:10087"/>
        <dbReference type="ChEBI" id="CHEBI:65314"/>
        <dbReference type="ChEBI" id="CHEBI:65315"/>
        <dbReference type="EC" id="5.4.99.12"/>
    </reaction>
</comment>
<comment type="subunit">
    <text evidence="1">Homodimer.</text>
</comment>
<comment type="similarity">
    <text evidence="1">Belongs to the tRNA pseudouridine synthase TruA family.</text>
</comment>
<name>TRUA_XYLF2</name>
<organism>
    <name type="scientific">Xylella fastidiosa (strain M23)</name>
    <dbReference type="NCBI Taxonomy" id="405441"/>
    <lineage>
        <taxon>Bacteria</taxon>
        <taxon>Pseudomonadati</taxon>
        <taxon>Pseudomonadota</taxon>
        <taxon>Gammaproteobacteria</taxon>
        <taxon>Lysobacterales</taxon>
        <taxon>Lysobacteraceae</taxon>
        <taxon>Xylella</taxon>
    </lineage>
</organism>
<reference key="1">
    <citation type="journal article" date="2010" name="J. Bacteriol.">
        <title>Whole genome sequences of two Xylella fastidiosa strains (M12 and M23) causing almond leaf scorch disease in California.</title>
        <authorList>
            <person name="Chen J."/>
            <person name="Xie G."/>
            <person name="Han S."/>
            <person name="Chertkov O."/>
            <person name="Sims D."/>
            <person name="Civerolo E.L."/>
        </authorList>
    </citation>
    <scope>NUCLEOTIDE SEQUENCE [LARGE SCALE GENOMIC DNA]</scope>
    <source>
        <strain>M23</strain>
    </source>
</reference>
<feature type="chain" id="PRO_1000097809" description="tRNA pseudouridine synthase A">
    <location>
        <begin position="1"/>
        <end position="257"/>
    </location>
</feature>
<feature type="active site" description="Nucleophile" evidence="1">
    <location>
        <position position="53"/>
    </location>
</feature>
<feature type="binding site" evidence="1">
    <location>
        <position position="111"/>
    </location>
    <ligand>
        <name>substrate</name>
    </ligand>
</feature>